<name>TOLB_RICFE</name>
<keyword id="KW-0131">Cell cycle</keyword>
<keyword id="KW-0132">Cell division</keyword>
<keyword id="KW-0574">Periplasm</keyword>
<keyword id="KW-0732">Signal</keyword>
<accession>Q4UM77</accession>
<feature type="signal peptide" evidence="1">
    <location>
        <begin position="1"/>
        <end position="19"/>
    </location>
</feature>
<feature type="chain" id="PRO_0000259084" description="Tol-Pal system protein TolB" evidence="1">
    <location>
        <begin position="20"/>
        <end position="444"/>
    </location>
</feature>
<evidence type="ECO:0000255" key="1">
    <source>
        <dbReference type="HAMAP-Rule" id="MF_00671"/>
    </source>
</evidence>
<reference key="1">
    <citation type="journal article" date="2005" name="PLoS Biol.">
        <title>The genome sequence of Rickettsia felis identifies the first putative conjugative plasmid in an obligate intracellular parasite.</title>
        <authorList>
            <person name="Ogata H."/>
            <person name="Renesto P."/>
            <person name="Audic S."/>
            <person name="Robert C."/>
            <person name="Blanc G."/>
            <person name="Fournier P.-E."/>
            <person name="Parinello H."/>
            <person name="Claverie J.-M."/>
            <person name="Raoult D."/>
        </authorList>
    </citation>
    <scope>NUCLEOTIDE SEQUENCE [LARGE SCALE GENOMIC DNA]</scope>
    <source>
        <strain>ATCC VR-1525 / URRWXCal2</strain>
    </source>
</reference>
<comment type="function">
    <text evidence="1">Part of the Tol-Pal system, which plays a role in outer membrane invagination during cell division and is important for maintaining outer membrane integrity.</text>
</comment>
<comment type="subunit">
    <text evidence="1">The Tol-Pal system is composed of five core proteins: the inner membrane proteins TolA, TolQ and TolR, the periplasmic protein TolB and the outer membrane protein Pal. They form a network linking the inner and outer membranes and the peptidoglycan layer.</text>
</comment>
<comment type="subcellular location">
    <subcellularLocation>
        <location evidence="1">Periplasm</location>
    </subcellularLocation>
</comment>
<comment type="similarity">
    <text evidence="1">Belongs to the TolB family.</text>
</comment>
<dbReference type="EMBL" id="CP000053">
    <property type="protein sequence ID" value="AAY61343.1"/>
    <property type="molecule type" value="Genomic_DNA"/>
</dbReference>
<dbReference type="SMR" id="Q4UM77"/>
<dbReference type="STRING" id="315456.RF_0492"/>
<dbReference type="KEGG" id="rfe:RF_0492"/>
<dbReference type="eggNOG" id="COG0823">
    <property type="taxonomic scope" value="Bacteria"/>
</dbReference>
<dbReference type="HOGENOM" id="CLU_047123_0_0_5"/>
<dbReference type="OrthoDB" id="9802240at2"/>
<dbReference type="Proteomes" id="UP000008548">
    <property type="component" value="Chromosome"/>
</dbReference>
<dbReference type="GO" id="GO:0042597">
    <property type="term" value="C:periplasmic space"/>
    <property type="evidence" value="ECO:0007669"/>
    <property type="project" value="UniProtKB-SubCell"/>
</dbReference>
<dbReference type="GO" id="GO:0051301">
    <property type="term" value="P:cell division"/>
    <property type="evidence" value="ECO:0007669"/>
    <property type="project" value="UniProtKB-UniRule"/>
</dbReference>
<dbReference type="GO" id="GO:0017038">
    <property type="term" value="P:protein import"/>
    <property type="evidence" value="ECO:0007669"/>
    <property type="project" value="InterPro"/>
</dbReference>
<dbReference type="Gene3D" id="2.120.10.30">
    <property type="entry name" value="TolB, C-terminal domain"/>
    <property type="match status" value="1"/>
</dbReference>
<dbReference type="Gene3D" id="3.40.50.10070">
    <property type="entry name" value="TolB, N-terminal domain"/>
    <property type="match status" value="1"/>
</dbReference>
<dbReference type="HAMAP" id="MF_00671">
    <property type="entry name" value="TolB"/>
    <property type="match status" value="1"/>
</dbReference>
<dbReference type="InterPro" id="IPR011042">
    <property type="entry name" value="6-blade_b-propeller_TolB-like"/>
</dbReference>
<dbReference type="InterPro" id="IPR011659">
    <property type="entry name" value="PD40"/>
</dbReference>
<dbReference type="InterPro" id="IPR014167">
    <property type="entry name" value="Tol-Pal_TolB"/>
</dbReference>
<dbReference type="InterPro" id="IPR007195">
    <property type="entry name" value="TolB_N"/>
</dbReference>
<dbReference type="NCBIfam" id="TIGR02800">
    <property type="entry name" value="propeller_TolB"/>
    <property type="match status" value="1"/>
</dbReference>
<dbReference type="PANTHER" id="PTHR36842:SF1">
    <property type="entry name" value="PROTEIN TOLB"/>
    <property type="match status" value="1"/>
</dbReference>
<dbReference type="PANTHER" id="PTHR36842">
    <property type="entry name" value="PROTEIN TOLB HOMOLOG"/>
    <property type="match status" value="1"/>
</dbReference>
<dbReference type="Pfam" id="PF07676">
    <property type="entry name" value="PD40"/>
    <property type="match status" value="4"/>
</dbReference>
<dbReference type="Pfam" id="PF04052">
    <property type="entry name" value="TolB_N"/>
    <property type="match status" value="1"/>
</dbReference>
<dbReference type="SUPFAM" id="SSF52964">
    <property type="entry name" value="TolB, N-terminal domain"/>
    <property type="match status" value="1"/>
</dbReference>
<dbReference type="SUPFAM" id="SSF69304">
    <property type="entry name" value="Tricorn protease N-terminal domain"/>
    <property type="match status" value="1"/>
</dbReference>
<sequence length="444" mass="49187">MRNIIYFILSLLFSFKGYALETINIEHGRADPTPIAVNKFNADSSADDVVGHDVVKVISNDLKLSGLFRPISSASFIEEKTGIEYKPLFAAWRQINASLLVNGEVKKLESGKLKISFILWDTLLEKQLAGEILEAPENLWRRAAHKIADKIYEKITGDAGYFDTKIVYVSESTSLPKIKRIALMDYDGANNKYLTNGKSLVLTPRFARSADKIFYVSYATKRRALVYEKDLKTGKESVVGDFSGISFAPRFSPDGRKAVMSIAKNGSTHIYEIDLATKRLHKLTDGFGINTSPSYSPDGKKIVYNSDRNGVPQLYIMNSDGSDVQRISFGGGSYTAPSWSPRGDYIAFTKITRGAEGKTFNIGIMKACPQDDENSERIITSGYLVESPCWSPNGRVIMFAKGWPSRAKAPGKNKIFAIDLTGHNEREIITPADASDPEWSGVLN</sequence>
<organism>
    <name type="scientific">Rickettsia felis (strain ATCC VR-1525 / URRWXCal2)</name>
    <name type="common">Rickettsia azadi</name>
    <dbReference type="NCBI Taxonomy" id="315456"/>
    <lineage>
        <taxon>Bacteria</taxon>
        <taxon>Pseudomonadati</taxon>
        <taxon>Pseudomonadota</taxon>
        <taxon>Alphaproteobacteria</taxon>
        <taxon>Rickettsiales</taxon>
        <taxon>Rickettsiaceae</taxon>
        <taxon>Rickettsieae</taxon>
        <taxon>Rickettsia</taxon>
        <taxon>spotted fever group</taxon>
    </lineage>
</organism>
<proteinExistence type="inferred from homology"/>
<gene>
    <name evidence="1" type="primary">tolB</name>
    <name type="ordered locus">RF_0492</name>
</gene>
<protein>
    <recommendedName>
        <fullName evidence="1">Tol-Pal system protein TolB</fullName>
    </recommendedName>
</protein>